<organism>
    <name type="scientific">Rattus norvegicus</name>
    <name type="common">Rat</name>
    <dbReference type="NCBI Taxonomy" id="10116"/>
    <lineage>
        <taxon>Eukaryota</taxon>
        <taxon>Metazoa</taxon>
        <taxon>Chordata</taxon>
        <taxon>Craniata</taxon>
        <taxon>Vertebrata</taxon>
        <taxon>Euteleostomi</taxon>
        <taxon>Mammalia</taxon>
        <taxon>Eutheria</taxon>
        <taxon>Euarchontoglires</taxon>
        <taxon>Glires</taxon>
        <taxon>Rodentia</taxon>
        <taxon>Myomorpha</taxon>
        <taxon>Muroidea</taxon>
        <taxon>Muridae</taxon>
        <taxon>Murinae</taxon>
        <taxon>Rattus</taxon>
    </lineage>
</organism>
<comment type="function">
    <text evidence="1">Acts as a repressor in the regulation of translation initiation of poly(A)-containing mRNAs. Its inhibitory activity on translation is mediated via its action on PABPC1. Displaces the interaction of PABPC1 with poly(A) RNA and competes with PAIP1 for binding to PABPC1. Its association with PABPC1 results in disruption of the cytoplasmic poly(A) RNP structure organization (By similarity).</text>
</comment>
<comment type="subunit">
    <text evidence="1">Interacts with the second and third RRM domains and C-terminus regions of PABPC1 in a 2:1 stoichiometry.</text>
</comment>
<comment type="subcellular location">
    <subcellularLocation>
        <location evidence="1">Cytoplasm</location>
    </subcellularLocation>
</comment>
<comment type="domain">
    <text evidence="1">Only the PABPC1-interacting motif-1 (PAM1) interferes with the binding of PABPC1 to poly(A) RNA and translation initiation.</text>
</comment>
<comment type="PTM">
    <text evidence="2">Ubiquitinated, leading to its degradation by the proteasome.</text>
</comment>
<comment type="similarity">
    <text evidence="4">Belongs to the PAIP2 family.</text>
</comment>
<proteinExistence type="evidence at transcript level"/>
<protein>
    <recommendedName>
        <fullName>Polyadenylate-binding protein-interacting protein 2</fullName>
        <shortName>PABP-interacting protein 2</shortName>
        <shortName>PAIP-2</shortName>
        <shortName>Poly(A)-binding protein-interacting protein 2</shortName>
    </recommendedName>
</protein>
<keyword id="KW-0963">Cytoplasm</keyword>
<keyword id="KW-1185">Reference proteome</keyword>
<keyword id="KW-0810">Translation regulation</keyword>
<keyword id="KW-0832">Ubl conjugation</keyword>
<accession>Q6AXZ0</accession>
<sequence length="124" mass="14700">MKDPSRSSTSPSIINDDVIINGHSHEEDNPFAEYMWMENEEEFNRQIEEELWEEEFIERCFQEMLEEEEEHEWFIPARDLPQTMDQIQDQFNDLVISDGSSLEDLVVKSNLNPNAKEFVPGVKY</sequence>
<dbReference type="EMBL" id="BC079261">
    <property type="protein sequence ID" value="AAH79261.1"/>
    <property type="molecule type" value="mRNA"/>
</dbReference>
<dbReference type="RefSeq" id="NP_001014170.1">
    <property type="nucleotide sequence ID" value="NM_001014148.1"/>
</dbReference>
<dbReference type="RefSeq" id="XP_008770266.1">
    <property type="nucleotide sequence ID" value="XM_008772044.2"/>
</dbReference>
<dbReference type="RefSeq" id="XP_008770270.1">
    <property type="nucleotide sequence ID" value="XM_008772048.2"/>
</dbReference>
<dbReference type="RefSeq" id="XP_017456481.1">
    <property type="nucleotide sequence ID" value="XM_017600992.1"/>
</dbReference>
<dbReference type="RefSeq" id="XP_017456482.1">
    <property type="nucleotide sequence ID" value="XM_017600993.1"/>
</dbReference>
<dbReference type="RefSeq" id="XP_017456484.1">
    <property type="nucleotide sequence ID" value="XM_017600995.1"/>
</dbReference>
<dbReference type="BMRB" id="Q6AXZ0"/>
<dbReference type="FunCoup" id="Q6AXZ0">
    <property type="interactions" value="2475"/>
</dbReference>
<dbReference type="STRING" id="10116.ENSRNOP00000026989"/>
<dbReference type="PhosphoSitePlus" id="Q6AXZ0"/>
<dbReference type="jPOST" id="Q6AXZ0"/>
<dbReference type="PaxDb" id="10116-ENSRNOP00000026989"/>
<dbReference type="GeneID" id="361309"/>
<dbReference type="KEGG" id="rno:361309"/>
<dbReference type="UCSC" id="RGD:1359176">
    <property type="organism name" value="rat"/>
</dbReference>
<dbReference type="AGR" id="RGD:1359176"/>
<dbReference type="CTD" id="51247"/>
<dbReference type="RGD" id="1359176">
    <property type="gene designation" value="Paip2"/>
</dbReference>
<dbReference type="VEuPathDB" id="HostDB:ENSRNOG00000019934"/>
<dbReference type="eggNOG" id="ENOG502RZKX">
    <property type="taxonomic scope" value="Eukaryota"/>
</dbReference>
<dbReference type="HOGENOM" id="CLU_134152_0_0_1"/>
<dbReference type="InParanoid" id="Q6AXZ0"/>
<dbReference type="OrthoDB" id="5985142at2759"/>
<dbReference type="PhylomeDB" id="Q6AXZ0"/>
<dbReference type="TreeFam" id="TF326855"/>
<dbReference type="PRO" id="PR:Q6AXZ0"/>
<dbReference type="Proteomes" id="UP000002494">
    <property type="component" value="Chromosome 18"/>
</dbReference>
<dbReference type="Bgee" id="ENSRNOG00000019934">
    <property type="expression patterns" value="Expressed in thymus and 19 other cell types or tissues"/>
</dbReference>
<dbReference type="GO" id="GO:0005737">
    <property type="term" value="C:cytoplasm"/>
    <property type="evidence" value="ECO:0000266"/>
    <property type="project" value="RGD"/>
</dbReference>
<dbReference type="GO" id="GO:0003729">
    <property type="term" value="F:mRNA binding"/>
    <property type="evidence" value="ECO:0000266"/>
    <property type="project" value="RGD"/>
</dbReference>
<dbReference type="GO" id="GO:0000900">
    <property type="term" value="F:mRNA regulatory element binding translation repressor activity"/>
    <property type="evidence" value="ECO:0007669"/>
    <property type="project" value="InterPro"/>
</dbReference>
<dbReference type="GO" id="GO:0030371">
    <property type="term" value="F:translation repressor activity"/>
    <property type="evidence" value="ECO:0000266"/>
    <property type="project" value="RGD"/>
</dbReference>
<dbReference type="GO" id="GO:0007613">
    <property type="term" value="P:memory"/>
    <property type="evidence" value="ECO:0000266"/>
    <property type="project" value="RGD"/>
</dbReference>
<dbReference type="GO" id="GO:0017148">
    <property type="term" value="P:negative regulation of translation"/>
    <property type="evidence" value="ECO:0000266"/>
    <property type="project" value="RGD"/>
</dbReference>
<dbReference type="GO" id="GO:0045947">
    <property type="term" value="P:negative regulation of translational initiation"/>
    <property type="evidence" value="ECO:0000266"/>
    <property type="project" value="RGD"/>
</dbReference>
<dbReference type="GO" id="GO:1900271">
    <property type="term" value="P:regulation of long-term synaptic potentiation"/>
    <property type="evidence" value="ECO:0000266"/>
    <property type="project" value="RGD"/>
</dbReference>
<dbReference type="GO" id="GO:0006417">
    <property type="term" value="P:regulation of translation"/>
    <property type="evidence" value="ECO:0000266"/>
    <property type="project" value="RGD"/>
</dbReference>
<dbReference type="GO" id="GO:0007283">
    <property type="term" value="P:spermatogenesis"/>
    <property type="evidence" value="ECO:0000266"/>
    <property type="project" value="RGD"/>
</dbReference>
<dbReference type="GO" id="GO:0006412">
    <property type="term" value="P:translation"/>
    <property type="evidence" value="ECO:0000266"/>
    <property type="project" value="RGD"/>
</dbReference>
<dbReference type="InterPro" id="IPR040396">
    <property type="entry name" value="PAIP2-like"/>
</dbReference>
<dbReference type="InterPro" id="IPR009818">
    <property type="entry name" value="PAM2_motif"/>
</dbReference>
<dbReference type="PANTHER" id="PTHR13154">
    <property type="entry name" value="POLYADENYLATE-BINDING PROTEIN-INTERACTING PROTEIN 2"/>
    <property type="match status" value="1"/>
</dbReference>
<dbReference type="PANTHER" id="PTHR13154:SF2">
    <property type="entry name" value="POLYADENYLATE-BINDING PROTEIN-INTERACTING PROTEIN 2"/>
    <property type="match status" value="1"/>
</dbReference>
<dbReference type="Pfam" id="PF07145">
    <property type="entry name" value="PAM2"/>
    <property type="match status" value="1"/>
</dbReference>
<evidence type="ECO:0000250" key="1"/>
<evidence type="ECO:0000250" key="2">
    <source>
        <dbReference type="UniProtKB" id="Q9BPZ3"/>
    </source>
</evidence>
<evidence type="ECO:0000256" key="3">
    <source>
        <dbReference type="SAM" id="MobiDB-lite"/>
    </source>
</evidence>
<evidence type="ECO:0000305" key="4"/>
<reference key="1">
    <citation type="journal article" date="2004" name="Genome Res.">
        <title>The status, quality, and expansion of the NIH full-length cDNA project: the Mammalian Gene Collection (MGC).</title>
        <authorList>
            <consortium name="The MGC Project Team"/>
        </authorList>
    </citation>
    <scope>NUCLEOTIDE SEQUENCE [LARGE SCALE MRNA]</scope>
    <source>
        <tissue>Testis</tissue>
    </source>
</reference>
<name>PAIP2_RAT</name>
<feature type="chain" id="PRO_0000252688" description="Polyadenylate-binding protein-interacting protein 2">
    <location>
        <begin position="1"/>
        <end position="124"/>
    </location>
</feature>
<feature type="region of interest" description="Disordered" evidence="3">
    <location>
        <begin position="1"/>
        <end position="24"/>
    </location>
</feature>
<feature type="region of interest" description="PABPC1-interacting motif-1 (PAM1)" evidence="1">
    <location>
        <begin position="22"/>
        <end position="75"/>
    </location>
</feature>
<feature type="region of interest" description="PABPC1-interacting motif-2 (PAM2)" evidence="1">
    <location>
        <begin position="105"/>
        <end position="120"/>
    </location>
</feature>
<feature type="compositionally biased region" description="Polar residues" evidence="3">
    <location>
        <begin position="1"/>
        <end position="13"/>
    </location>
</feature>
<gene>
    <name type="primary">Paip2</name>
</gene>